<reference key="1">
    <citation type="journal article" date="1988" name="J. Biol. Chem.">
        <title>Cloning and sequencing of the yeast gene for dolichol phosphate mannose synthase, an essential protein.</title>
        <authorList>
            <person name="Orlean P."/>
            <person name="Albright C."/>
            <person name="Robbins P.W."/>
        </authorList>
    </citation>
    <scope>NUCLEOTIDE SEQUENCE [GENOMIC DNA]</scope>
    <scope>FUNCTION</scope>
    <scope>CATALYTIC ACTIVITY</scope>
</reference>
<reference key="2">
    <citation type="journal article" date="1997" name="Nature">
        <title>The nucleotide sequence of Saccharomyces cerevisiae chromosome XVI.</title>
        <authorList>
            <person name="Bussey H."/>
            <person name="Storms R.K."/>
            <person name="Ahmed A."/>
            <person name="Albermann K."/>
            <person name="Allen E."/>
            <person name="Ansorge W."/>
            <person name="Araujo R."/>
            <person name="Aparicio A."/>
            <person name="Barrell B.G."/>
            <person name="Badcock K."/>
            <person name="Benes V."/>
            <person name="Botstein D."/>
            <person name="Bowman S."/>
            <person name="Brueckner M."/>
            <person name="Carpenter J."/>
            <person name="Cherry J.M."/>
            <person name="Chung E."/>
            <person name="Churcher C.M."/>
            <person name="Coster F."/>
            <person name="Davis K."/>
            <person name="Davis R.W."/>
            <person name="Dietrich F.S."/>
            <person name="Delius H."/>
            <person name="DiPaolo T."/>
            <person name="Dubois E."/>
            <person name="Duesterhoeft A."/>
            <person name="Duncan M."/>
            <person name="Floeth M."/>
            <person name="Fortin N."/>
            <person name="Friesen J.D."/>
            <person name="Fritz C."/>
            <person name="Goffeau A."/>
            <person name="Hall J."/>
            <person name="Hebling U."/>
            <person name="Heumann K."/>
            <person name="Hilbert H."/>
            <person name="Hillier L.W."/>
            <person name="Hunicke-Smith S."/>
            <person name="Hyman R.W."/>
            <person name="Johnston M."/>
            <person name="Kalman S."/>
            <person name="Kleine K."/>
            <person name="Komp C."/>
            <person name="Kurdi O."/>
            <person name="Lashkari D."/>
            <person name="Lew H."/>
            <person name="Lin A."/>
            <person name="Lin D."/>
            <person name="Louis E.J."/>
            <person name="Marathe R."/>
            <person name="Messenguy F."/>
            <person name="Mewes H.-W."/>
            <person name="Mirtipati S."/>
            <person name="Moestl D."/>
            <person name="Mueller-Auer S."/>
            <person name="Namath A."/>
            <person name="Nentwich U."/>
            <person name="Oefner P."/>
            <person name="Pearson D."/>
            <person name="Petel F.X."/>
            <person name="Pohl T.M."/>
            <person name="Purnelle B."/>
            <person name="Rajandream M.A."/>
            <person name="Rechmann S."/>
            <person name="Rieger M."/>
            <person name="Riles L."/>
            <person name="Roberts D."/>
            <person name="Schaefer M."/>
            <person name="Scharfe M."/>
            <person name="Scherens B."/>
            <person name="Schramm S."/>
            <person name="Schroeder M."/>
            <person name="Sdicu A.-M."/>
            <person name="Tettelin H."/>
            <person name="Urrestarazu L.A."/>
            <person name="Ushinsky S."/>
            <person name="Vierendeels F."/>
            <person name="Vissers S."/>
            <person name="Voss H."/>
            <person name="Walsh S.V."/>
            <person name="Wambutt R."/>
            <person name="Wang Y."/>
            <person name="Wedler E."/>
            <person name="Wedler H."/>
            <person name="Winnett E."/>
            <person name="Zhong W.-W."/>
            <person name="Zollner A."/>
            <person name="Vo D.H."/>
            <person name="Hani J."/>
        </authorList>
    </citation>
    <scope>NUCLEOTIDE SEQUENCE [LARGE SCALE GENOMIC DNA]</scope>
    <source>
        <strain>ATCC 204508 / S288c</strain>
    </source>
</reference>
<reference key="3">
    <citation type="journal article" date="2014" name="G3 (Bethesda)">
        <title>The reference genome sequence of Saccharomyces cerevisiae: Then and now.</title>
        <authorList>
            <person name="Engel S.R."/>
            <person name="Dietrich F.S."/>
            <person name="Fisk D.G."/>
            <person name="Binkley G."/>
            <person name="Balakrishnan R."/>
            <person name="Costanzo M.C."/>
            <person name="Dwight S.S."/>
            <person name="Hitz B.C."/>
            <person name="Karra K."/>
            <person name="Nash R.S."/>
            <person name="Weng S."/>
            <person name="Wong E.D."/>
            <person name="Lloyd P."/>
            <person name="Skrzypek M.S."/>
            <person name="Miyasato S.R."/>
            <person name="Simison M."/>
            <person name="Cherry J.M."/>
        </authorList>
    </citation>
    <scope>GENOME REANNOTATION</scope>
    <source>
        <strain>ATCC 204508 / S288c</strain>
    </source>
</reference>
<reference key="4">
    <citation type="submission" date="2005-05" db="UniProtKB">
        <authorList>
            <person name="Bienvenut W.V."/>
            <person name="Peters C."/>
        </authorList>
    </citation>
    <scope>PROTEIN SEQUENCE OF 2-65; 88-137; 150-166; 184-191; 200-212 AND 223-232</scope>
    <scope>CLEAVAGE OF INITIATOR METHIONINE</scope>
    <scope>ACETYLATION AT SER-2</scope>
    <scope>IDENTIFICATION BY MASS SPECTROMETRY</scope>
</reference>
<reference key="5">
    <citation type="journal article" date="2003" name="Nature">
        <title>Global analysis of protein localization in budding yeast.</title>
        <authorList>
            <person name="Huh W.-K."/>
            <person name="Falvo J.V."/>
            <person name="Gerke L.C."/>
            <person name="Carroll A.S."/>
            <person name="Howson R.W."/>
            <person name="Weissman J.S."/>
            <person name="O'Shea E.K."/>
        </authorList>
    </citation>
    <scope>SUBCELLULAR LOCATION [LARGE SCALE ANALYSIS]</scope>
</reference>
<reference key="6">
    <citation type="journal article" date="2003" name="Nature">
        <title>Global analysis of protein expression in yeast.</title>
        <authorList>
            <person name="Ghaemmaghami S."/>
            <person name="Huh W.-K."/>
            <person name="Bower K."/>
            <person name="Howson R.W."/>
            <person name="Belle A."/>
            <person name="Dephoure N."/>
            <person name="O'Shea E.K."/>
            <person name="Weissman J.S."/>
        </authorList>
    </citation>
    <scope>LEVEL OF PROTEIN EXPRESSION [LARGE SCALE ANALYSIS]</scope>
</reference>
<reference key="7">
    <citation type="journal article" date="2005" name="J. Cell Biol.">
        <title>Cell growth-dependent coordination of lipid signaling and glycosylation is mediated by interactions between Sac1p and Dpm1p.</title>
        <authorList>
            <person name="Faulhammer F."/>
            <person name="Konrad G."/>
            <person name="Brankatschk B."/>
            <person name="Tahirovic S."/>
            <person name="Knoedler A."/>
            <person name="Mayinger P."/>
        </authorList>
    </citation>
    <scope>INTERACTION WITH SAC1</scope>
    <scope>SUBCELLULAR LOCATION</scope>
</reference>
<reference key="8">
    <citation type="journal article" date="2005" name="J. Biol. Chem.">
        <title>In vitro phosphorylation by cAMP-dependent protein kinase up-regulates recombinant Saccharomyces cerevisiae mannosylphosphodolichol synthase.</title>
        <authorList>
            <person name="Banerjee D.K."/>
            <person name="Carrasquillo E.A."/>
            <person name="Hughey P."/>
            <person name="Schutzbach J.S."/>
            <person name="Martinez J.A."/>
            <person name="Baksi K."/>
        </authorList>
    </citation>
    <scope>CATALYTIC ACTIVITY</scope>
    <scope>BIOPHYSICOCHEMICAL PROPERTIES</scope>
    <scope>PHOSPHORYLATION AT SER-141 BY PKA</scope>
    <scope>MUTAGENESIS OF SER-141</scope>
</reference>
<reference key="9">
    <citation type="journal article" date="2022" name="FEBS Lett.">
        <title>Aspirin damages the cell wall of Saccharomyces cerevisiae by inhibiting the expression and activity of dolichol-phosphate mannose synthase 1.</title>
        <authorList>
            <person name="Li M."/>
            <person name="Zhu P."/>
            <person name="Huang Z."/>
            <person name="Huang Y."/>
            <person name="Lv X."/>
            <person name="Zheng Q."/>
            <person name="Zhu Z."/>
            <person name="Fan Z."/>
            <person name="Yang Y."/>
            <person name="Shi P."/>
        </authorList>
    </citation>
    <scope>FUNCTION</scope>
    <scope>CATALYTIC ACTIVITY</scope>
    <scope>ACTIVITY REGULATION</scope>
    <scope>INDUCTION</scope>
</reference>
<keyword id="KW-0007">Acetylation</keyword>
<keyword id="KW-0903">Direct protein sequencing</keyword>
<keyword id="KW-0256">Endoplasmic reticulum</keyword>
<keyword id="KW-0328">Glycosyltransferase</keyword>
<keyword id="KW-0460">Magnesium</keyword>
<keyword id="KW-0464">Manganese</keyword>
<keyword id="KW-0472">Membrane</keyword>
<keyword id="KW-0479">Metal-binding</keyword>
<keyword id="KW-0597">Phosphoprotein</keyword>
<keyword id="KW-1185">Reference proteome</keyword>
<keyword id="KW-0808">Transferase</keyword>
<keyword id="KW-0812">Transmembrane</keyword>
<keyword id="KW-1133">Transmembrane helix</keyword>
<name>DPM1_YEAST</name>
<accession>P14020</accession>
<accession>D6W4I3</accession>
<gene>
    <name evidence="12" type="primary">DPM1</name>
    <name type="synonym">SED3</name>
    <name type="ordered locus">YPR183W</name>
    <name type="ORF">P9705.3</name>
</gene>
<sequence length="267" mass="30362">MSIEYSVIVPAYHEKLNIKPLTTRLFAGMSPEMAKKTELIFVDDNSQDGSVEEVDALAHQGYNVRIIVRTNERGLSSAVLKGFYEAKGQYLVCMDADLQHPPETVPKLFESLHDHAFTLGTRYAPGVGIDKDWPMYRRVISSTARMMARPLTIASDPMSGFFGLQKKYLENCNPRDINSQGFKIALELLAKLPLPRDPRVAIGEVPFTFGVRTEGESKLSGKVIIQYLQQLKELYVFKFGANNLILFITFWSILFFYVCYQLYHLVF</sequence>
<comment type="function">
    <text evidence="7 8">Transfers mannose from GDP-mannose to dolichol monophosphate to form dolichol phosphate mannose (Dol-P-Man) which is the mannosyl donor in pathways leading to N-glycosylation, glycosyl phosphatidylinositol membrane anchoring, and O-mannosylation of proteins.</text>
</comment>
<comment type="catalytic activity">
    <reaction evidence="5 7 8">
        <text>a di-trans,poly-cis-dolichyl phosphate + GDP-alpha-D-mannose = a di-trans,poly-cis-dolichyl beta-D-mannosyl phosphate + GDP</text>
        <dbReference type="Rhea" id="RHEA:21184"/>
        <dbReference type="Rhea" id="RHEA-COMP:19498"/>
        <dbReference type="Rhea" id="RHEA-COMP:19501"/>
        <dbReference type="ChEBI" id="CHEBI:57527"/>
        <dbReference type="ChEBI" id="CHEBI:57683"/>
        <dbReference type="ChEBI" id="CHEBI:58189"/>
        <dbReference type="ChEBI" id="CHEBI:58211"/>
        <dbReference type="EC" id="2.4.1.83"/>
    </reaction>
    <physiologicalReaction direction="left-to-right" evidence="7 8">
        <dbReference type="Rhea" id="RHEA:21185"/>
    </physiologicalReaction>
</comment>
<comment type="cofactor">
    <cofactor evidence="1">
        <name>Mg(2+)</name>
        <dbReference type="ChEBI" id="CHEBI:18420"/>
    </cofactor>
    <cofactor evidence="1">
        <name>Mn(2+)</name>
        <dbReference type="ChEBI" id="CHEBI:29035"/>
    </cofactor>
    <cofactor evidence="1">
        <name>Ca(2+)</name>
        <dbReference type="ChEBI" id="CHEBI:29108"/>
    </cofactor>
    <text evidence="1">Binds 1 divalent metal cation.</text>
</comment>
<comment type="activity regulation">
    <text evidence="8">Inhibited by acetylsalicylic acid (aspirin).</text>
</comment>
<comment type="biophysicochemical properties">
    <kinetics>
        <KM evidence="5">1.2 uM for GDP-mannose</KM>
        <Vmax evidence="5">25.1 nmol/min/mg enzyme for GDP-mannose</Vmax>
        <text evidence="5">For the phosphorylated protein, the Vmax increases to 146.7 nmol/min/mg enzyme, whereas the KM stays at 1.1 uM for GDP-mannose, increasing the catalytic efficiency 6-fold.</text>
    </kinetics>
</comment>
<comment type="pathway">
    <text evidence="11">Protein modification; protein glycosylation.</text>
</comment>
<comment type="subunit">
    <text evidence="6">Interacts with the C-terminus of SAC1, thereby sequestering it to the endoplasmic reticulum in exponentially growing cells. Under nutrient limitation conditions, this interaction is rapidly abolished.</text>
</comment>
<comment type="subcellular location">
    <subcellularLocation>
        <location evidence="3 6">Endoplasmic reticulum membrane</location>
        <topology evidence="6">Single-pass type IV membrane protein</topology>
        <orientation evidence="6">Cytoplasmic side</orientation>
    </subcellularLocation>
</comment>
<comment type="induction">
    <text evidence="8">Repressed by aspirin.</text>
</comment>
<comment type="miscellaneous">
    <text evidence="4">Present with 1885 molecules/cell in log phase SD medium.</text>
</comment>
<comment type="similarity">
    <text evidence="10">Belongs to the glycosyltransferase 2 family.</text>
</comment>
<organism>
    <name type="scientific">Saccharomyces cerevisiae (strain ATCC 204508 / S288c)</name>
    <name type="common">Baker's yeast</name>
    <dbReference type="NCBI Taxonomy" id="559292"/>
    <lineage>
        <taxon>Eukaryota</taxon>
        <taxon>Fungi</taxon>
        <taxon>Dikarya</taxon>
        <taxon>Ascomycota</taxon>
        <taxon>Saccharomycotina</taxon>
        <taxon>Saccharomycetes</taxon>
        <taxon>Saccharomycetales</taxon>
        <taxon>Saccharomycetaceae</taxon>
        <taxon>Saccharomyces</taxon>
    </lineage>
</organism>
<protein>
    <recommendedName>
        <fullName>Dolichol-phosphate mannosyltransferase</fullName>
        <ecNumber evidence="5 7 8">2.4.1.83</ecNumber>
    </recommendedName>
    <alternativeName>
        <fullName>Dolichol-phosphate mannose synthase</fullName>
        <shortName>DPM synthase</shortName>
    </alternativeName>
    <alternativeName>
        <fullName>Dolichyl-phosphate beta-D-mannosyltransferase</fullName>
    </alternativeName>
    <alternativeName>
        <fullName>Mannose-P-dolichol synthase</fullName>
        <shortName>MPD synthase</shortName>
    </alternativeName>
</protein>
<dbReference type="EC" id="2.4.1.83" evidence="5 7 8"/>
<dbReference type="EMBL" id="J04184">
    <property type="protein sequence ID" value="AAA34578.1"/>
    <property type="molecule type" value="Genomic_DNA"/>
</dbReference>
<dbReference type="EMBL" id="U25842">
    <property type="protein sequence ID" value="AAB68116.1"/>
    <property type="molecule type" value="Genomic_DNA"/>
</dbReference>
<dbReference type="EMBL" id="BK006949">
    <property type="protein sequence ID" value="DAA11599.1"/>
    <property type="molecule type" value="Genomic_DNA"/>
</dbReference>
<dbReference type="PIR" id="A32122">
    <property type="entry name" value="A32122"/>
</dbReference>
<dbReference type="RefSeq" id="NP_015509.1">
    <property type="nucleotide sequence ID" value="NM_001184280.1"/>
</dbReference>
<dbReference type="SMR" id="P14020"/>
<dbReference type="BioGRID" id="36355">
    <property type="interactions" value="505"/>
</dbReference>
<dbReference type="DIP" id="DIP-4087N"/>
<dbReference type="FunCoup" id="P14020">
    <property type="interactions" value="994"/>
</dbReference>
<dbReference type="IntAct" id="P14020">
    <property type="interactions" value="21"/>
</dbReference>
<dbReference type="MINT" id="P14020"/>
<dbReference type="STRING" id="4932.YPR183W"/>
<dbReference type="CAZy" id="GT2">
    <property type="family name" value="Glycosyltransferase Family 2"/>
</dbReference>
<dbReference type="iPTMnet" id="P14020"/>
<dbReference type="PaxDb" id="4932-YPR183W"/>
<dbReference type="PeptideAtlas" id="P14020"/>
<dbReference type="EnsemblFungi" id="YPR183W_mRNA">
    <property type="protein sequence ID" value="YPR183W"/>
    <property type="gene ID" value="YPR183W"/>
</dbReference>
<dbReference type="GeneID" id="856313"/>
<dbReference type="KEGG" id="sce:YPR183W"/>
<dbReference type="AGR" id="SGD:S000006387"/>
<dbReference type="SGD" id="S000006387">
    <property type="gene designation" value="DPM1"/>
</dbReference>
<dbReference type="VEuPathDB" id="FungiDB:YPR183W"/>
<dbReference type="eggNOG" id="KOG2978">
    <property type="taxonomic scope" value="Eukaryota"/>
</dbReference>
<dbReference type="GeneTree" id="ENSGT00940000153481"/>
<dbReference type="HOGENOM" id="CLU_033536_13_1_1"/>
<dbReference type="InParanoid" id="P14020"/>
<dbReference type="OMA" id="SAWANFY"/>
<dbReference type="OrthoDB" id="2603at2759"/>
<dbReference type="BioCyc" id="MetaCyc:YPR183W-MONOMER"/>
<dbReference type="BioCyc" id="YEAST:YPR183W-MONOMER"/>
<dbReference type="BRENDA" id="2.4.1.83">
    <property type="organism ID" value="984"/>
</dbReference>
<dbReference type="SABIO-RK" id="P14020"/>
<dbReference type="UniPathway" id="UPA00378"/>
<dbReference type="BioGRID-ORCS" id="856313">
    <property type="hits" value="9 hits in 10 CRISPR screens"/>
</dbReference>
<dbReference type="PRO" id="PR:P14020"/>
<dbReference type="Proteomes" id="UP000002311">
    <property type="component" value="Chromosome XVI"/>
</dbReference>
<dbReference type="RNAct" id="P14020">
    <property type="molecule type" value="protein"/>
</dbReference>
<dbReference type="GO" id="GO:0071944">
    <property type="term" value="C:cell periphery"/>
    <property type="evidence" value="ECO:0007005"/>
    <property type="project" value="SGD"/>
</dbReference>
<dbReference type="GO" id="GO:0005783">
    <property type="term" value="C:endoplasmic reticulum"/>
    <property type="evidence" value="ECO:0000314"/>
    <property type="project" value="SGD"/>
</dbReference>
<dbReference type="GO" id="GO:0005789">
    <property type="term" value="C:endoplasmic reticulum membrane"/>
    <property type="evidence" value="ECO:0000318"/>
    <property type="project" value="GO_Central"/>
</dbReference>
<dbReference type="GO" id="GO:0005741">
    <property type="term" value="C:mitochondrial outer membrane"/>
    <property type="evidence" value="ECO:0007005"/>
    <property type="project" value="SGD"/>
</dbReference>
<dbReference type="GO" id="GO:0005739">
    <property type="term" value="C:mitochondrion"/>
    <property type="evidence" value="ECO:0007005"/>
    <property type="project" value="SGD"/>
</dbReference>
<dbReference type="GO" id="GO:0042175">
    <property type="term" value="C:nuclear outer membrane-endoplasmic reticulum membrane network"/>
    <property type="evidence" value="ECO:0000314"/>
    <property type="project" value="SGD"/>
</dbReference>
<dbReference type="GO" id="GO:0004582">
    <property type="term" value="F:dolichyl-phosphate beta-D-mannosyltransferase activity"/>
    <property type="evidence" value="ECO:0000314"/>
    <property type="project" value="SGD"/>
</dbReference>
<dbReference type="GO" id="GO:0046872">
    <property type="term" value="F:metal ion binding"/>
    <property type="evidence" value="ECO:0000250"/>
    <property type="project" value="UniProtKB"/>
</dbReference>
<dbReference type="GO" id="GO:0180047">
    <property type="term" value="P:dolichol phosphate mannose biosynthetic process"/>
    <property type="evidence" value="ECO:0000250"/>
    <property type="project" value="UniProtKB"/>
</dbReference>
<dbReference type="GO" id="GO:0006488">
    <property type="term" value="P:dolichol-linked oligosaccharide biosynthetic process"/>
    <property type="evidence" value="ECO:0000315"/>
    <property type="project" value="SGD"/>
</dbReference>
<dbReference type="GO" id="GO:0006506">
    <property type="term" value="P:GPI anchor biosynthetic process"/>
    <property type="evidence" value="ECO:0000315"/>
    <property type="project" value="SGD"/>
</dbReference>
<dbReference type="GO" id="GO:0035269">
    <property type="term" value="P:protein O-linked mannosylation"/>
    <property type="evidence" value="ECO:0000250"/>
    <property type="project" value="UniProtKB"/>
</dbReference>
<dbReference type="CDD" id="cd06442">
    <property type="entry name" value="DPM1_like"/>
    <property type="match status" value="1"/>
</dbReference>
<dbReference type="FunFam" id="3.90.550.10:FF:000119">
    <property type="entry name" value="Dolichol-phosphate mannosyltransferase subunit 1"/>
    <property type="match status" value="1"/>
</dbReference>
<dbReference type="Gene3D" id="3.90.550.10">
    <property type="entry name" value="Spore Coat Polysaccharide Biosynthesis Protein SpsA, Chain A"/>
    <property type="match status" value="1"/>
</dbReference>
<dbReference type="InterPro" id="IPR039528">
    <property type="entry name" value="DPM1-like"/>
</dbReference>
<dbReference type="InterPro" id="IPR001173">
    <property type="entry name" value="Glyco_trans_2-like"/>
</dbReference>
<dbReference type="InterPro" id="IPR029044">
    <property type="entry name" value="Nucleotide-diphossugar_trans"/>
</dbReference>
<dbReference type="PANTHER" id="PTHR43398">
    <property type="entry name" value="DOLICHOL-PHOSPHATE MANNOSYLTRANSFERASE SUBUNIT 1"/>
    <property type="match status" value="1"/>
</dbReference>
<dbReference type="PANTHER" id="PTHR43398:SF1">
    <property type="entry name" value="DOLICHOL-PHOSPHATE MANNOSYLTRANSFERASE SUBUNIT 1"/>
    <property type="match status" value="1"/>
</dbReference>
<dbReference type="Pfam" id="PF00535">
    <property type="entry name" value="Glycos_transf_2"/>
    <property type="match status" value="1"/>
</dbReference>
<dbReference type="SUPFAM" id="SSF53448">
    <property type="entry name" value="Nucleotide-diphospho-sugar transferases"/>
    <property type="match status" value="1"/>
</dbReference>
<proteinExistence type="evidence at protein level"/>
<feature type="initiator methionine" description="Removed" evidence="9">
    <location>
        <position position="1"/>
    </location>
</feature>
<feature type="chain" id="PRO_0000059175" description="Dolichol-phosphate mannosyltransferase">
    <location>
        <begin position="2"/>
        <end position="267"/>
    </location>
</feature>
<feature type="topological domain" description="Cytoplasmic" evidence="2">
    <location>
        <begin position="2"/>
        <end position="238"/>
    </location>
</feature>
<feature type="transmembrane region" description="Helical; Anchor for type IV membrane protein" evidence="2">
    <location>
        <begin position="239"/>
        <end position="259"/>
    </location>
</feature>
<feature type="topological domain" description="Lumenal" evidence="2">
    <location>
        <begin position="260"/>
        <end position="267"/>
    </location>
</feature>
<feature type="binding site" evidence="1">
    <location>
        <position position="10"/>
    </location>
    <ligand>
        <name>GDP-alpha-D-mannose</name>
        <dbReference type="ChEBI" id="CHEBI:57527"/>
    </ligand>
</feature>
<feature type="binding site" evidence="1">
    <location>
        <position position="12"/>
    </location>
    <ligand>
        <name>GDP-alpha-D-mannose</name>
        <dbReference type="ChEBI" id="CHEBI:57527"/>
    </ligand>
</feature>
<feature type="binding site" evidence="1">
    <location>
        <position position="14"/>
    </location>
    <ligand>
        <name>GDP-alpha-D-mannose</name>
        <dbReference type="ChEBI" id="CHEBI:57527"/>
    </ligand>
</feature>
<feature type="binding site" evidence="1">
    <location>
        <position position="42"/>
    </location>
    <ligand>
        <name>GDP-alpha-D-mannose</name>
        <dbReference type="ChEBI" id="CHEBI:57527"/>
    </ligand>
</feature>
<feature type="binding site" evidence="1">
    <location>
        <position position="44"/>
    </location>
    <ligand>
        <name>GDP-alpha-D-mannose</name>
        <dbReference type="ChEBI" id="CHEBI:57527"/>
    </ligand>
</feature>
<feature type="binding site" evidence="1">
    <location>
        <position position="95"/>
    </location>
    <ligand>
        <name>GDP-alpha-D-mannose</name>
        <dbReference type="ChEBI" id="CHEBI:57527"/>
    </ligand>
</feature>
<feature type="binding site" evidence="1">
    <location>
        <position position="96"/>
    </location>
    <ligand>
        <name>GDP-alpha-D-mannose</name>
        <dbReference type="ChEBI" id="CHEBI:57527"/>
    </ligand>
</feature>
<feature type="binding site" evidence="1">
    <location>
        <position position="97"/>
    </location>
    <ligand>
        <name>GDP-alpha-D-mannose</name>
        <dbReference type="ChEBI" id="CHEBI:57527"/>
    </ligand>
</feature>
<feature type="binding site" evidence="1">
    <location>
        <position position="97"/>
    </location>
    <ligand>
        <name>Mg(2+)</name>
        <dbReference type="ChEBI" id="CHEBI:18420"/>
    </ligand>
</feature>
<feature type="binding site" evidence="1">
    <location>
        <position position="97"/>
    </location>
    <ligand>
        <name>Mn(2+)</name>
        <dbReference type="ChEBI" id="CHEBI:29035"/>
    </ligand>
</feature>
<feature type="binding site" evidence="1">
    <location>
        <position position="99"/>
    </location>
    <ligand>
        <name>GDP-alpha-D-mannose</name>
        <dbReference type="ChEBI" id="CHEBI:57527"/>
    </ligand>
</feature>
<feature type="binding site" evidence="1">
    <location>
        <position position="99"/>
    </location>
    <ligand>
        <name>Mg(2+)</name>
        <dbReference type="ChEBI" id="CHEBI:18420"/>
    </ligand>
</feature>
<feature type="binding site" evidence="1">
    <location>
        <position position="99"/>
    </location>
    <ligand>
        <name>Mn(2+)</name>
        <dbReference type="ChEBI" id="CHEBI:29035"/>
    </ligand>
</feature>
<feature type="binding site" evidence="1">
    <location>
        <position position="122"/>
    </location>
    <ligand>
        <name>GDP-alpha-D-mannose</name>
        <dbReference type="ChEBI" id="CHEBI:57527"/>
    </ligand>
</feature>
<feature type="binding site" evidence="1">
    <location>
        <position position="183"/>
    </location>
    <ligand>
        <name>GDP-alpha-D-mannose</name>
        <dbReference type="ChEBI" id="CHEBI:57527"/>
    </ligand>
</feature>
<feature type="binding site" evidence="1">
    <location>
        <position position="212"/>
    </location>
    <ligand>
        <name>GDP-alpha-D-mannose</name>
        <dbReference type="ChEBI" id="CHEBI:57527"/>
    </ligand>
</feature>
<feature type="binding site" evidence="1">
    <location>
        <position position="218"/>
    </location>
    <ligand>
        <name>GDP-alpha-D-mannose</name>
        <dbReference type="ChEBI" id="CHEBI:57527"/>
    </ligand>
</feature>
<feature type="modified residue" description="N-acetylserine" evidence="9">
    <location>
        <position position="2"/>
    </location>
</feature>
<feature type="modified residue" description="Phosphoserine; by PKA" evidence="5">
    <location>
        <position position="141"/>
    </location>
</feature>
<feature type="mutagenesis site" description="Reduces specific activity 2-fold." evidence="5">
    <original>S</original>
    <variation>A</variation>
    <location>
        <position position="141"/>
    </location>
</feature>
<evidence type="ECO:0000250" key="1">
    <source>
        <dbReference type="UniProtKB" id="Q8U4M3"/>
    </source>
</evidence>
<evidence type="ECO:0000255" key="2"/>
<evidence type="ECO:0000269" key="3">
    <source>
    </source>
</evidence>
<evidence type="ECO:0000269" key="4">
    <source>
    </source>
</evidence>
<evidence type="ECO:0000269" key="5">
    <source>
    </source>
</evidence>
<evidence type="ECO:0000269" key="6">
    <source>
    </source>
</evidence>
<evidence type="ECO:0000269" key="7">
    <source>
    </source>
</evidence>
<evidence type="ECO:0000269" key="8">
    <source>
    </source>
</evidence>
<evidence type="ECO:0000269" key="9">
    <source ref="4"/>
</evidence>
<evidence type="ECO:0000305" key="10"/>
<evidence type="ECO:0000305" key="11">
    <source>
    </source>
</evidence>
<evidence type="ECO:0000312" key="12">
    <source>
        <dbReference type="SGD" id="S000006387"/>
    </source>
</evidence>